<dbReference type="EC" id="3.4.21.102"/>
<dbReference type="EMBL" id="CP000951">
    <property type="protein sequence ID" value="ACA98847.1"/>
    <property type="molecule type" value="Genomic_DNA"/>
</dbReference>
<dbReference type="EMBL" id="X63049">
    <property type="protein sequence ID" value="CAA44776.1"/>
    <property type="status" value="ALT_FRAME"/>
    <property type="molecule type" value="Genomic_DNA"/>
</dbReference>
<dbReference type="SMR" id="P42784"/>
<dbReference type="STRING" id="32049.SYNPCC7002_A0843"/>
<dbReference type="MEROPS" id="S41.008"/>
<dbReference type="KEGG" id="syp:SYNPCC7002_A0843"/>
<dbReference type="eggNOG" id="COG0793">
    <property type="taxonomic scope" value="Bacteria"/>
</dbReference>
<dbReference type="HOGENOM" id="CLU_017295_0_0_3"/>
<dbReference type="Proteomes" id="UP000001688">
    <property type="component" value="Chromosome"/>
</dbReference>
<dbReference type="GO" id="GO:0030288">
    <property type="term" value="C:outer membrane-bounded periplasmic space"/>
    <property type="evidence" value="ECO:0007669"/>
    <property type="project" value="TreeGrafter"/>
</dbReference>
<dbReference type="GO" id="GO:0031979">
    <property type="term" value="C:plasma membrane-derived thylakoid lumen"/>
    <property type="evidence" value="ECO:0007669"/>
    <property type="project" value="UniProtKB-SubCell"/>
</dbReference>
<dbReference type="GO" id="GO:0004252">
    <property type="term" value="F:serine-type endopeptidase activity"/>
    <property type="evidence" value="ECO:0007669"/>
    <property type="project" value="UniProtKB-EC"/>
</dbReference>
<dbReference type="GO" id="GO:0006508">
    <property type="term" value="P:proteolysis"/>
    <property type="evidence" value="ECO:0007669"/>
    <property type="project" value="UniProtKB-KW"/>
</dbReference>
<dbReference type="GO" id="GO:0007165">
    <property type="term" value="P:signal transduction"/>
    <property type="evidence" value="ECO:0007669"/>
    <property type="project" value="TreeGrafter"/>
</dbReference>
<dbReference type="CDD" id="cd06782">
    <property type="entry name" value="cpPDZ_CPP-like"/>
    <property type="match status" value="1"/>
</dbReference>
<dbReference type="CDD" id="cd07560">
    <property type="entry name" value="Peptidase_S41_CPP"/>
    <property type="match status" value="1"/>
</dbReference>
<dbReference type="FunFam" id="3.90.226.10:FF:000023">
    <property type="entry name" value="Carboxyl-terminal processing protease"/>
    <property type="match status" value="1"/>
</dbReference>
<dbReference type="FunFam" id="3.30.750.44:FF:000002">
    <property type="entry name" value="carboxyl-terminal-processing peptidase 2, chloroplastic"/>
    <property type="match status" value="1"/>
</dbReference>
<dbReference type="FunFam" id="2.30.42.10:FF:000063">
    <property type="entry name" value="Peptidase, S41 family"/>
    <property type="match status" value="1"/>
</dbReference>
<dbReference type="Gene3D" id="2.30.42.10">
    <property type="match status" value="1"/>
</dbReference>
<dbReference type="Gene3D" id="3.30.750.44">
    <property type="match status" value="1"/>
</dbReference>
<dbReference type="Gene3D" id="3.90.226.10">
    <property type="entry name" value="2-enoyl-CoA Hydratase, Chain A, domain 1"/>
    <property type="match status" value="1"/>
</dbReference>
<dbReference type="InterPro" id="IPR029045">
    <property type="entry name" value="ClpP/crotonase-like_dom_sf"/>
</dbReference>
<dbReference type="InterPro" id="IPR054621">
    <property type="entry name" value="Cterm_S41_CtpA"/>
</dbReference>
<dbReference type="InterPro" id="IPR001478">
    <property type="entry name" value="PDZ"/>
</dbReference>
<dbReference type="InterPro" id="IPR036034">
    <property type="entry name" value="PDZ_sf"/>
</dbReference>
<dbReference type="InterPro" id="IPR004447">
    <property type="entry name" value="Peptidase_S41A"/>
</dbReference>
<dbReference type="InterPro" id="IPR005151">
    <property type="entry name" value="Tail-specific_protease"/>
</dbReference>
<dbReference type="NCBIfam" id="NF045588">
    <property type="entry name" value="Cterm_S41_CtpA"/>
    <property type="match status" value="1"/>
</dbReference>
<dbReference type="NCBIfam" id="TIGR00225">
    <property type="entry name" value="prc"/>
    <property type="match status" value="1"/>
</dbReference>
<dbReference type="PANTHER" id="PTHR32060:SF30">
    <property type="entry name" value="CARBOXY-TERMINAL PROCESSING PROTEASE CTPA"/>
    <property type="match status" value="1"/>
</dbReference>
<dbReference type="PANTHER" id="PTHR32060">
    <property type="entry name" value="TAIL-SPECIFIC PROTEASE"/>
    <property type="match status" value="1"/>
</dbReference>
<dbReference type="Pfam" id="PF00595">
    <property type="entry name" value="PDZ"/>
    <property type="match status" value="1"/>
</dbReference>
<dbReference type="Pfam" id="PF03572">
    <property type="entry name" value="Peptidase_S41"/>
    <property type="match status" value="1"/>
</dbReference>
<dbReference type="SMART" id="SM00228">
    <property type="entry name" value="PDZ"/>
    <property type="match status" value="1"/>
</dbReference>
<dbReference type="SMART" id="SM00245">
    <property type="entry name" value="TSPc"/>
    <property type="match status" value="1"/>
</dbReference>
<dbReference type="SUPFAM" id="SSF52096">
    <property type="entry name" value="ClpP/crotonase"/>
    <property type="match status" value="1"/>
</dbReference>
<dbReference type="SUPFAM" id="SSF50156">
    <property type="entry name" value="PDZ domain-like"/>
    <property type="match status" value="1"/>
</dbReference>
<dbReference type="PROSITE" id="PS50106">
    <property type="entry name" value="PDZ"/>
    <property type="match status" value="1"/>
</dbReference>
<accession>P42784</accession>
<accession>B1XIH6</accession>
<feature type="signal peptide" evidence="4">
    <location>
        <begin position="1"/>
        <end position="29"/>
    </location>
</feature>
<feature type="chain" id="PRO_0000207201" description="Carboxyl-terminal-processing protease">
    <location>
        <begin position="30"/>
        <end position="414"/>
    </location>
</feature>
<feature type="domain" description="PDZ" evidence="5">
    <location>
        <begin position="100"/>
        <end position="184"/>
    </location>
</feature>
<feature type="active site" description="Charge relay system" evidence="1">
    <location>
        <position position="310"/>
    </location>
</feature>
<feature type="active site" description="Charge relay system" evidence="1">
    <location>
        <position position="321"/>
    </location>
</feature>
<feature type="active site" description="Charge relay system" evidence="1">
    <location>
        <position position="335"/>
    </location>
</feature>
<sequence length="414" mass="45575">MLRKRLQAGLCSLLLVLVLVFGPMERAIAFTDEQDLLLQAWRYVSQAYVDETFNHQNWWLIRQKFLKRPLKTRDEAYEAVGEMLALLDDPYTRLLRPEQYRSLKVSTSGELSGVGLQINVNPEVDVLEVILPLPGSPAEAAGIEAKDQILAIDGIDTRNIGLEEAAARMRGKKGSTVSLTVKSPKTDTVRTVKVTRDTIALNPVYDKLDEKNGEKVGYIRLNQFSANAKTEIIKSLNQLQKQGADRYVLDLRNNPGGLLQAGIEIARLWLDQETIVYTVNRQGIFESYSAVGQPLTDAPLVVLVNQATASASEILAGALQDNGRAMLVGEKTFGKGLIQSLFELPDGAGMAVTVAKYETPLHHDINKLGIMPDEVVPQEPIGYAMMGSETDLQYQAALDLLTQDQAIAQISQAS</sequence>
<name>CTPA_PICP2</name>
<organism>
    <name type="scientific">Picosynechococcus sp. (strain ATCC 27264 / PCC 7002 / PR-6)</name>
    <name type="common">Agmenellum quadruplicatum</name>
    <dbReference type="NCBI Taxonomy" id="32049"/>
    <lineage>
        <taxon>Bacteria</taxon>
        <taxon>Bacillati</taxon>
        <taxon>Cyanobacteriota</taxon>
        <taxon>Cyanophyceae</taxon>
        <taxon>Oscillatoriophycideae</taxon>
        <taxon>Chroococcales</taxon>
        <taxon>Geminocystaceae</taxon>
        <taxon>Picosynechococcus</taxon>
    </lineage>
</organism>
<proteinExistence type="inferred from homology"/>
<gene>
    <name type="primary">ctpA</name>
    <name type="ordered locus">SYNPCC7002_A0843</name>
</gene>
<reference key="1">
    <citation type="submission" date="2008-02" db="EMBL/GenBank/DDBJ databases">
        <title>Complete sequence of Synechococcus sp. PCC 7002.</title>
        <authorList>
            <person name="Li T."/>
            <person name="Zhao J."/>
            <person name="Zhao C."/>
            <person name="Liu Z."/>
            <person name="Zhao F."/>
            <person name="Marquardt J."/>
            <person name="Nomura C.T."/>
            <person name="Persson S."/>
            <person name="Detter J.C."/>
            <person name="Richardson P.M."/>
            <person name="Lanz C."/>
            <person name="Schuster S.C."/>
            <person name="Wang J."/>
            <person name="Li S."/>
            <person name="Huang X."/>
            <person name="Cai T."/>
            <person name="Yu Z."/>
            <person name="Luo J."/>
            <person name="Zhao J."/>
            <person name="Bryant D.A."/>
        </authorList>
    </citation>
    <scope>NUCLEOTIDE SEQUENCE [LARGE SCALE GENOMIC DNA]</scope>
    <source>
        <strain>ATCC 27264 / PCC 7002 / PR-6</strain>
    </source>
</reference>
<reference key="2">
    <citation type="journal article" date="1992" name="Plant Mol. Biol.">
        <title>Cloning and sequencing of the petBD operon from the cyanobacterium Synechococcus sp. PCC 7002.</title>
        <authorList>
            <person name="Brand S.N."/>
            <person name="Tan X."/>
            <person name="Widger W.R."/>
        </authorList>
    </citation>
    <scope>NUCLEOTIDE SEQUENCE [GENOMIC DNA] OF 1-411</scope>
</reference>
<protein>
    <recommendedName>
        <fullName>Carboxyl-terminal-processing protease</fullName>
        <ecNumber>3.4.21.102</ecNumber>
    </recommendedName>
    <alternativeName>
        <fullName>CtpA</fullName>
    </alternativeName>
</protein>
<comment type="function">
    <text evidence="3">Cleavage of the 16 C-terminal residues from the D1 precursor of photosystem II (PSII). This proteolytic processing is necessary to allow the light-driven assembly of the oxygen-evolving cluster (a tetranuclear manganese), which is responsible for photosynthetic water oxidation.</text>
</comment>
<comment type="catalytic activity">
    <reaction>
        <text>The enzyme shows specific recognition of a C-terminal tripeptide, Xaa-Yaa-Zaa, in which Xaa is preferably Ala or Leu, Yaa is preferably Ala or Tyr, and Zaa is preferably Ala, but then cleaves at a variable distance from the C-terminus. A typical cleavage is -Ala-Ala-|-Arg-Ala-Ala-Lys-Glu-Asn-Tyr-Ala-Leu-Ala-Ala.</text>
        <dbReference type="EC" id="3.4.21.102"/>
    </reaction>
</comment>
<comment type="subcellular location">
    <subcellularLocation>
        <location evidence="2">Cellular thylakoid lumen</location>
    </subcellularLocation>
</comment>
<comment type="similarity">
    <text evidence="6">Belongs to the peptidase S41A family.</text>
</comment>
<comment type="sequence caution" evidence="6">
    <conflict type="frameshift">
        <sequence resource="EMBL-CDS" id="CAA44776"/>
    </conflict>
</comment>
<evidence type="ECO:0000250" key="1"/>
<evidence type="ECO:0000250" key="2">
    <source>
        <dbReference type="UniProtKB" id="O04073"/>
    </source>
</evidence>
<evidence type="ECO:0000250" key="3">
    <source>
        <dbReference type="UniProtKB" id="Q55669"/>
    </source>
</evidence>
<evidence type="ECO:0000255" key="4"/>
<evidence type="ECO:0000255" key="5">
    <source>
        <dbReference type="PROSITE-ProRule" id="PRU00143"/>
    </source>
</evidence>
<evidence type="ECO:0000305" key="6"/>
<keyword id="KW-0378">Hydrolase</keyword>
<keyword id="KW-0645">Protease</keyword>
<keyword id="KW-1185">Reference proteome</keyword>
<keyword id="KW-0720">Serine protease</keyword>
<keyword id="KW-0732">Signal</keyword>
<keyword id="KW-0793">Thylakoid</keyword>